<reference key="1">
    <citation type="journal article" date="2005" name="Proc. Natl. Acad. Sci. U.S.A.">
        <title>Comparison of the complete genome sequences of Pseudomonas syringae pv. syringae B728a and pv. tomato DC3000.</title>
        <authorList>
            <person name="Feil H."/>
            <person name="Feil W.S."/>
            <person name="Chain P."/>
            <person name="Larimer F."/>
            <person name="Dibartolo G."/>
            <person name="Copeland A."/>
            <person name="Lykidis A."/>
            <person name="Trong S."/>
            <person name="Nolan M."/>
            <person name="Goltsman E."/>
            <person name="Thiel J."/>
            <person name="Malfatti S."/>
            <person name="Loper J.E."/>
            <person name="Lapidus A."/>
            <person name="Detter J.C."/>
            <person name="Land M."/>
            <person name="Richardson P.M."/>
            <person name="Kyrpides N.C."/>
            <person name="Ivanova N."/>
            <person name="Lindow S.E."/>
        </authorList>
    </citation>
    <scope>NUCLEOTIDE SEQUENCE [LARGE SCALE GENOMIC DNA]</scope>
    <source>
        <strain>B728a</strain>
    </source>
</reference>
<gene>
    <name evidence="1" type="primary">glyA2</name>
    <name type="ordered locus">Psyr_4712</name>
</gene>
<dbReference type="EC" id="2.1.2.1" evidence="1"/>
<dbReference type="EMBL" id="CP000075">
    <property type="protein sequence ID" value="AAY39739.1"/>
    <property type="molecule type" value="Genomic_DNA"/>
</dbReference>
<dbReference type="RefSeq" id="WP_011269187.1">
    <property type="nucleotide sequence ID" value="NC_007005.1"/>
</dbReference>
<dbReference type="RefSeq" id="YP_237777.1">
    <property type="nucleotide sequence ID" value="NC_007005.1"/>
</dbReference>
<dbReference type="SMR" id="Q4ZM83"/>
<dbReference type="STRING" id="205918.Psyr_4712"/>
<dbReference type="KEGG" id="psb:Psyr_4712"/>
<dbReference type="PATRIC" id="fig|205918.7.peg.4859"/>
<dbReference type="eggNOG" id="COG0112">
    <property type="taxonomic scope" value="Bacteria"/>
</dbReference>
<dbReference type="HOGENOM" id="CLU_022477_2_1_6"/>
<dbReference type="OrthoDB" id="9803846at2"/>
<dbReference type="UniPathway" id="UPA00193"/>
<dbReference type="UniPathway" id="UPA00288">
    <property type="reaction ID" value="UER01023"/>
</dbReference>
<dbReference type="Proteomes" id="UP000000426">
    <property type="component" value="Chromosome"/>
</dbReference>
<dbReference type="GO" id="GO:0005829">
    <property type="term" value="C:cytosol"/>
    <property type="evidence" value="ECO:0007669"/>
    <property type="project" value="TreeGrafter"/>
</dbReference>
<dbReference type="GO" id="GO:0004372">
    <property type="term" value="F:glycine hydroxymethyltransferase activity"/>
    <property type="evidence" value="ECO:0007669"/>
    <property type="project" value="UniProtKB-UniRule"/>
</dbReference>
<dbReference type="GO" id="GO:0030170">
    <property type="term" value="F:pyridoxal phosphate binding"/>
    <property type="evidence" value="ECO:0007669"/>
    <property type="project" value="UniProtKB-UniRule"/>
</dbReference>
<dbReference type="GO" id="GO:0019264">
    <property type="term" value="P:glycine biosynthetic process from serine"/>
    <property type="evidence" value="ECO:0007669"/>
    <property type="project" value="UniProtKB-UniRule"/>
</dbReference>
<dbReference type="GO" id="GO:0035999">
    <property type="term" value="P:tetrahydrofolate interconversion"/>
    <property type="evidence" value="ECO:0007669"/>
    <property type="project" value="UniProtKB-UniRule"/>
</dbReference>
<dbReference type="CDD" id="cd00378">
    <property type="entry name" value="SHMT"/>
    <property type="match status" value="1"/>
</dbReference>
<dbReference type="FunFam" id="3.40.640.10:FF:000001">
    <property type="entry name" value="Serine hydroxymethyltransferase"/>
    <property type="match status" value="1"/>
</dbReference>
<dbReference type="FunFam" id="3.90.1150.10:FF:000003">
    <property type="entry name" value="Serine hydroxymethyltransferase"/>
    <property type="match status" value="1"/>
</dbReference>
<dbReference type="Gene3D" id="3.90.1150.10">
    <property type="entry name" value="Aspartate Aminotransferase, domain 1"/>
    <property type="match status" value="1"/>
</dbReference>
<dbReference type="Gene3D" id="3.40.640.10">
    <property type="entry name" value="Type I PLP-dependent aspartate aminotransferase-like (Major domain)"/>
    <property type="match status" value="1"/>
</dbReference>
<dbReference type="HAMAP" id="MF_00051">
    <property type="entry name" value="SHMT"/>
    <property type="match status" value="1"/>
</dbReference>
<dbReference type="InterPro" id="IPR015424">
    <property type="entry name" value="PyrdxlP-dep_Trfase"/>
</dbReference>
<dbReference type="InterPro" id="IPR015421">
    <property type="entry name" value="PyrdxlP-dep_Trfase_major"/>
</dbReference>
<dbReference type="InterPro" id="IPR015422">
    <property type="entry name" value="PyrdxlP-dep_Trfase_small"/>
</dbReference>
<dbReference type="InterPro" id="IPR001085">
    <property type="entry name" value="Ser_HO-MeTrfase"/>
</dbReference>
<dbReference type="InterPro" id="IPR049943">
    <property type="entry name" value="Ser_HO-MeTrfase-like"/>
</dbReference>
<dbReference type="InterPro" id="IPR019798">
    <property type="entry name" value="Ser_HO-MeTrfase_PLP_BS"/>
</dbReference>
<dbReference type="InterPro" id="IPR039429">
    <property type="entry name" value="SHMT-like_dom"/>
</dbReference>
<dbReference type="NCBIfam" id="NF000586">
    <property type="entry name" value="PRK00011.1"/>
    <property type="match status" value="1"/>
</dbReference>
<dbReference type="PANTHER" id="PTHR11680">
    <property type="entry name" value="SERINE HYDROXYMETHYLTRANSFERASE"/>
    <property type="match status" value="1"/>
</dbReference>
<dbReference type="PANTHER" id="PTHR11680:SF50">
    <property type="entry name" value="SERINE HYDROXYMETHYLTRANSFERASE"/>
    <property type="match status" value="1"/>
</dbReference>
<dbReference type="Pfam" id="PF00464">
    <property type="entry name" value="SHMT"/>
    <property type="match status" value="1"/>
</dbReference>
<dbReference type="PIRSF" id="PIRSF000412">
    <property type="entry name" value="SHMT"/>
    <property type="match status" value="1"/>
</dbReference>
<dbReference type="SUPFAM" id="SSF53383">
    <property type="entry name" value="PLP-dependent transferases"/>
    <property type="match status" value="1"/>
</dbReference>
<dbReference type="PROSITE" id="PS00096">
    <property type="entry name" value="SHMT"/>
    <property type="match status" value="1"/>
</dbReference>
<protein>
    <recommendedName>
        <fullName evidence="1">Serine hydroxymethyltransferase 2</fullName>
        <shortName evidence="1">SHMT 2</shortName>
        <shortName evidence="1">Serine methylase 2</shortName>
        <ecNumber evidence="1">2.1.2.1</ecNumber>
    </recommendedName>
</protein>
<name>GLYA2_PSEU2</name>
<comment type="function">
    <text evidence="1">Catalyzes the reversible interconversion of serine and glycine with tetrahydrofolate (THF) serving as the one-carbon carrier. This reaction serves as the major source of one-carbon groups required for the biosynthesis of purines, thymidylate, methionine, and other important biomolecules. Also exhibits THF-independent aldolase activity toward beta-hydroxyamino acids, producing glycine and aldehydes, via a retro-aldol mechanism.</text>
</comment>
<comment type="catalytic activity">
    <reaction evidence="1">
        <text>(6R)-5,10-methylene-5,6,7,8-tetrahydrofolate + glycine + H2O = (6S)-5,6,7,8-tetrahydrofolate + L-serine</text>
        <dbReference type="Rhea" id="RHEA:15481"/>
        <dbReference type="ChEBI" id="CHEBI:15377"/>
        <dbReference type="ChEBI" id="CHEBI:15636"/>
        <dbReference type="ChEBI" id="CHEBI:33384"/>
        <dbReference type="ChEBI" id="CHEBI:57305"/>
        <dbReference type="ChEBI" id="CHEBI:57453"/>
        <dbReference type="EC" id="2.1.2.1"/>
    </reaction>
</comment>
<comment type="cofactor">
    <cofactor evidence="1">
        <name>pyridoxal 5'-phosphate</name>
        <dbReference type="ChEBI" id="CHEBI:597326"/>
    </cofactor>
</comment>
<comment type="pathway">
    <text evidence="1">One-carbon metabolism; tetrahydrofolate interconversion.</text>
</comment>
<comment type="pathway">
    <text evidence="1">Amino-acid biosynthesis; glycine biosynthesis; glycine from L-serine: step 1/1.</text>
</comment>
<comment type="subunit">
    <text evidence="1">Homodimer.</text>
</comment>
<comment type="subcellular location">
    <subcellularLocation>
        <location evidence="1">Cytoplasm</location>
    </subcellularLocation>
</comment>
<comment type="similarity">
    <text evidence="1">Belongs to the SHMT family.</text>
</comment>
<proteinExistence type="inferred from homology"/>
<organism>
    <name type="scientific">Pseudomonas syringae pv. syringae (strain B728a)</name>
    <dbReference type="NCBI Taxonomy" id="205918"/>
    <lineage>
        <taxon>Bacteria</taxon>
        <taxon>Pseudomonadati</taxon>
        <taxon>Pseudomonadota</taxon>
        <taxon>Gammaproteobacteria</taxon>
        <taxon>Pseudomonadales</taxon>
        <taxon>Pseudomonadaceae</taxon>
        <taxon>Pseudomonas</taxon>
        <taxon>Pseudomonas syringae</taxon>
    </lineage>
</organism>
<feature type="chain" id="PRO_0000235010" description="Serine hydroxymethyltransferase 2">
    <location>
        <begin position="1"/>
        <end position="417"/>
    </location>
</feature>
<feature type="binding site" evidence="1">
    <location>
        <position position="121"/>
    </location>
    <ligand>
        <name>(6S)-5,6,7,8-tetrahydrofolate</name>
        <dbReference type="ChEBI" id="CHEBI:57453"/>
    </ligand>
</feature>
<feature type="binding site" evidence="1">
    <location>
        <begin position="125"/>
        <end position="127"/>
    </location>
    <ligand>
        <name>(6S)-5,6,7,8-tetrahydrofolate</name>
        <dbReference type="ChEBI" id="CHEBI:57453"/>
    </ligand>
</feature>
<feature type="binding site" evidence="1">
    <location>
        <begin position="355"/>
        <end position="357"/>
    </location>
    <ligand>
        <name>(6S)-5,6,7,8-tetrahydrofolate</name>
        <dbReference type="ChEBI" id="CHEBI:57453"/>
    </ligand>
</feature>
<feature type="site" description="Plays an important role in substrate specificity" evidence="1">
    <location>
        <position position="229"/>
    </location>
</feature>
<feature type="modified residue" description="N6-(pyridoxal phosphate)lysine" evidence="1">
    <location>
        <position position="230"/>
    </location>
</feature>
<accession>Q4ZM83</accession>
<sequence length="417" mass="44874">MFSKQDQIQGYDDALLSAMNAEEQRQEDHIELIASENYTSKRVMQAQGSGLTNKYAEGYPGKRYYGGCEHVDKVEQLAIERARQLFGADYANVQPHSGSQANAAVYLALLQAGDTVLGMSLAHGGHLTHGAKVSFSGKLYNAVQYGIDTATGLIDYDEVERIAVECQPKMIIAGFSAYSKTLDFPRFRAIADKVGAYLFVDMAHVAGLVAAGLYPNPLPYADVVTTTTHKTLRGPRGGLILARANEELEKKFNSAVFPGGQGGPLMHVIAAKAVCFKEAMEPGFKAYQQQVIDNAQAMAQVFIDRGFDVVSGGTDNHLFLVSLIRQGLTGKDADAALGRAHITVNKNSVPNDPQSPFVTSGLRIGTPAVTTRGFKVTQCVELAGWICDILDNLGDADVEADVASQVAALCADFPVYR</sequence>
<keyword id="KW-0028">Amino-acid biosynthesis</keyword>
<keyword id="KW-0963">Cytoplasm</keyword>
<keyword id="KW-0554">One-carbon metabolism</keyword>
<keyword id="KW-0663">Pyridoxal phosphate</keyword>
<keyword id="KW-0808">Transferase</keyword>
<evidence type="ECO:0000255" key="1">
    <source>
        <dbReference type="HAMAP-Rule" id="MF_00051"/>
    </source>
</evidence>